<evidence type="ECO:0000250" key="1"/>
<evidence type="ECO:0000255" key="2">
    <source>
        <dbReference type="PROSITE-ProRule" id="PRU00215"/>
    </source>
</evidence>
<evidence type="ECO:0000255" key="3">
    <source>
        <dbReference type="PROSITE-ProRule" id="PRU00732"/>
    </source>
</evidence>
<evidence type="ECO:0000256" key="4">
    <source>
        <dbReference type="SAM" id="MobiDB-lite"/>
    </source>
</evidence>
<evidence type="ECO:0000305" key="5"/>
<accession>P0C8Q0</accession>
<accession>C8V7E9</accession>
<accession>Q5AU02</accession>
<dbReference type="EMBL" id="AACD01000144">
    <property type="protein sequence ID" value="EAA58884.1"/>
    <property type="status" value="ALT_SEQ"/>
    <property type="molecule type" value="Genomic_DNA"/>
</dbReference>
<dbReference type="EMBL" id="BN001302">
    <property type="protein sequence ID" value="CBF74156.1"/>
    <property type="molecule type" value="Genomic_DNA"/>
</dbReference>
<dbReference type="RefSeq" id="XP_681497.1">
    <property type="nucleotide sequence ID" value="XM_676405.1"/>
</dbReference>
<dbReference type="SMR" id="P0C8Q0"/>
<dbReference type="FunCoup" id="P0C8Q0">
    <property type="interactions" value="1047"/>
</dbReference>
<dbReference type="STRING" id="227321.P0C8Q0"/>
<dbReference type="EnsemblFungi" id="CBF74156">
    <property type="protein sequence ID" value="CBF74156"/>
    <property type="gene ID" value="ANIA_11055"/>
</dbReference>
<dbReference type="KEGG" id="ani:ANIA_11055"/>
<dbReference type="VEuPathDB" id="FungiDB:AN11055"/>
<dbReference type="eggNOG" id="KOG2086">
    <property type="taxonomic scope" value="Eukaryota"/>
</dbReference>
<dbReference type="HOGENOM" id="CLU_391091_0_0_1"/>
<dbReference type="InParanoid" id="P0C8Q0"/>
<dbReference type="OMA" id="NKDHTDK"/>
<dbReference type="OrthoDB" id="25887at2759"/>
<dbReference type="Proteomes" id="UP000000560">
    <property type="component" value="Chromosome II"/>
</dbReference>
<dbReference type="GO" id="GO:0005829">
    <property type="term" value="C:cytosol"/>
    <property type="evidence" value="ECO:0000318"/>
    <property type="project" value="GO_Central"/>
</dbReference>
<dbReference type="GO" id="GO:0005634">
    <property type="term" value="C:nucleus"/>
    <property type="evidence" value="ECO:0000318"/>
    <property type="project" value="GO_Central"/>
</dbReference>
<dbReference type="GO" id="GO:0043130">
    <property type="term" value="F:ubiquitin binding"/>
    <property type="evidence" value="ECO:0000318"/>
    <property type="project" value="GO_Central"/>
</dbReference>
<dbReference type="GO" id="GO:0000045">
    <property type="term" value="P:autophagosome assembly"/>
    <property type="evidence" value="ECO:0000318"/>
    <property type="project" value="GO_Central"/>
</dbReference>
<dbReference type="GO" id="GO:0007030">
    <property type="term" value="P:Golgi organization"/>
    <property type="evidence" value="ECO:0000318"/>
    <property type="project" value="GO_Central"/>
</dbReference>
<dbReference type="GO" id="GO:0061025">
    <property type="term" value="P:membrane fusion"/>
    <property type="evidence" value="ECO:0000318"/>
    <property type="project" value="GO_Central"/>
</dbReference>
<dbReference type="GO" id="GO:0031468">
    <property type="term" value="P:nuclear membrane reassembly"/>
    <property type="evidence" value="ECO:0000318"/>
    <property type="project" value="GO_Central"/>
</dbReference>
<dbReference type="GO" id="GO:0043161">
    <property type="term" value="P:proteasome-mediated ubiquitin-dependent protein catabolic process"/>
    <property type="evidence" value="ECO:0000318"/>
    <property type="project" value="GO_Central"/>
</dbReference>
<dbReference type="CDD" id="cd14348">
    <property type="entry name" value="UBA_p47"/>
    <property type="match status" value="1"/>
</dbReference>
<dbReference type="CDD" id="cd01770">
    <property type="entry name" value="UBX_UBXN2"/>
    <property type="match status" value="1"/>
</dbReference>
<dbReference type="FunFam" id="1.10.8.10:FF:000020">
    <property type="entry name" value="NSFL1 (p97) cofactor (p47)"/>
    <property type="match status" value="1"/>
</dbReference>
<dbReference type="FunFam" id="3.10.20.90:FF:000179">
    <property type="entry name" value="Plant UBX domain-containing protein 4"/>
    <property type="match status" value="1"/>
</dbReference>
<dbReference type="FunFam" id="3.30.420.210:FF:000002">
    <property type="entry name" value="UBX domain-containing protein 1"/>
    <property type="match status" value="1"/>
</dbReference>
<dbReference type="Gene3D" id="1.10.8.10">
    <property type="entry name" value="DNA helicase RuvA subunit, C-terminal domain"/>
    <property type="match status" value="1"/>
</dbReference>
<dbReference type="Gene3D" id="3.10.20.90">
    <property type="entry name" value="Phosphatidylinositol 3-kinase Catalytic Subunit, Chain A, domain 1"/>
    <property type="match status" value="1"/>
</dbReference>
<dbReference type="Gene3D" id="3.30.420.210">
    <property type="entry name" value="SEP domain"/>
    <property type="match status" value="1"/>
</dbReference>
<dbReference type="InterPro" id="IPR036241">
    <property type="entry name" value="NSFL1C_SEP_dom_sf"/>
</dbReference>
<dbReference type="InterPro" id="IPR012989">
    <property type="entry name" value="SEP_domain"/>
</dbReference>
<dbReference type="InterPro" id="IPR009060">
    <property type="entry name" value="UBA-like_sf"/>
</dbReference>
<dbReference type="InterPro" id="IPR029071">
    <property type="entry name" value="Ubiquitin-like_domsf"/>
</dbReference>
<dbReference type="InterPro" id="IPR001012">
    <property type="entry name" value="UBX_dom"/>
</dbReference>
<dbReference type="PANTHER" id="PTHR23333:SF20">
    <property type="entry name" value="NSFL1 COFACTOR P47"/>
    <property type="match status" value="1"/>
</dbReference>
<dbReference type="PANTHER" id="PTHR23333">
    <property type="entry name" value="UBX DOMAIN CONTAINING PROTEIN"/>
    <property type="match status" value="1"/>
</dbReference>
<dbReference type="Pfam" id="PF08059">
    <property type="entry name" value="SEP"/>
    <property type="match status" value="1"/>
</dbReference>
<dbReference type="Pfam" id="PF14555">
    <property type="entry name" value="UBA_4"/>
    <property type="match status" value="1"/>
</dbReference>
<dbReference type="Pfam" id="PF00789">
    <property type="entry name" value="UBX"/>
    <property type="match status" value="1"/>
</dbReference>
<dbReference type="SMART" id="SM00553">
    <property type="entry name" value="SEP"/>
    <property type="match status" value="1"/>
</dbReference>
<dbReference type="SMART" id="SM00166">
    <property type="entry name" value="UBX"/>
    <property type="match status" value="1"/>
</dbReference>
<dbReference type="SUPFAM" id="SSF102848">
    <property type="entry name" value="NSFL1 (p97 ATPase) cofactor p47, SEP domain"/>
    <property type="match status" value="1"/>
</dbReference>
<dbReference type="SUPFAM" id="SSF46934">
    <property type="entry name" value="UBA-like"/>
    <property type="match status" value="1"/>
</dbReference>
<dbReference type="SUPFAM" id="SSF54236">
    <property type="entry name" value="Ubiquitin-like"/>
    <property type="match status" value="1"/>
</dbReference>
<dbReference type="PROSITE" id="PS51399">
    <property type="entry name" value="SEP"/>
    <property type="match status" value="1"/>
</dbReference>
<dbReference type="PROSITE" id="PS50033">
    <property type="entry name" value="UBX"/>
    <property type="match status" value="1"/>
</dbReference>
<reference key="1">
    <citation type="journal article" date="2005" name="Nature">
        <title>Sequencing of Aspergillus nidulans and comparative analysis with A. fumigatus and A. oryzae.</title>
        <authorList>
            <person name="Galagan J.E."/>
            <person name="Calvo S.E."/>
            <person name="Cuomo C."/>
            <person name="Ma L.-J."/>
            <person name="Wortman J.R."/>
            <person name="Batzoglou S."/>
            <person name="Lee S.-I."/>
            <person name="Bastuerkmen M."/>
            <person name="Spevak C.C."/>
            <person name="Clutterbuck J."/>
            <person name="Kapitonov V."/>
            <person name="Jurka J."/>
            <person name="Scazzocchio C."/>
            <person name="Farman M.L."/>
            <person name="Butler J."/>
            <person name="Purcell S."/>
            <person name="Harris S."/>
            <person name="Braus G.H."/>
            <person name="Draht O."/>
            <person name="Busch S."/>
            <person name="D'Enfert C."/>
            <person name="Bouchier C."/>
            <person name="Goldman G.H."/>
            <person name="Bell-Pedersen D."/>
            <person name="Griffiths-Jones S."/>
            <person name="Doonan J.H."/>
            <person name="Yu J."/>
            <person name="Vienken K."/>
            <person name="Pain A."/>
            <person name="Freitag M."/>
            <person name="Selker E.U."/>
            <person name="Archer D.B."/>
            <person name="Penalva M.A."/>
            <person name="Oakley B.R."/>
            <person name="Momany M."/>
            <person name="Tanaka T."/>
            <person name="Kumagai T."/>
            <person name="Asai K."/>
            <person name="Machida M."/>
            <person name="Nierman W.C."/>
            <person name="Denning D.W."/>
            <person name="Caddick M.X."/>
            <person name="Hynes M."/>
            <person name="Paoletti M."/>
            <person name="Fischer R."/>
            <person name="Miller B.L."/>
            <person name="Dyer P.S."/>
            <person name="Sachs M.S."/>
            <person name="Osmani S.A."/>
            <person name="Birren B.W."/>
        </authorList>
    </citation>
    <scope>NUCLEOTIDE SEQUENCE [LARGE SCALE GENOMIC DNA]</scope>
    <source>
        <strain>FGSC A4 / ATCC 38163 / CBS 112.46 / NRRL 194 / M139</strain>
    </source>
</reference>
<reference key="2">
    <citation type="journal article" date="2009" name="Fungal Genet. Biol.">
        <title>The 2008 update of the Aspergillus nidulans genome annotation: a community effort.</title>
        <authorList>
            <person name="Wortman J.R."/>
            <person name="Gilsenan J.M."/>
            <person name="Joardar V."/>
            <person name="Deegan J."/>
            <person name="Clutterbuck J."/>
            <person name="Andersen M.R."/>
            <person name="Archer D."/>
            <person name="Bencina M."/>
            <person name="Braus G."/>
            <person name="Coutinho P."/>
            <person name="von Dohren H."/>
            <person name="Doonan J."/>
            <person name="Driessen A.J."/>
            <person name="Durek P."/>
            <person name="Espeso E."/>
            <person name="Fekete E."/>
            <person name="Flipphi M."/>
            <person name="Estrada C.G."/>
            <person name="Geysens S."/>
            <person name="Goldman G."/>
            <person name="de Groot P.W."/>
            <person name="Hansen K."/>
            <person name="Harris S.D."/>
            <person name="Heinekamp T."/>
            <person name="Helmstaedt K."/>
            <person name="Henrissat B."/>
            <person name="Hofmann G."/>
            <person name="Homan T."/>
            <person name="Horio T."/>
            <person name="Horiuchi H."/>
            <person name="James S."/>
            <person name="Jones M."/>
            <person name="Karaffa L."/>
            <person name="Karanyi Z."/>
            <person name="Kato M."/>
            <person name="Keller N."/>
            <person name="Kelly D.E."/>
            <person name="Kiel J.A."/>
            <person name="Kim J.M."/>
            <person name="van der Klei I.J."/>
            <person name="Klis F.M."/>
            <person name="Kovalchuk A."/>
            <person name="Krasevec N."/>
            <person name="Kubicek C.P."/>
            <person name="Liu B."/>
            <person name="Maccabe A."/>
            <person name="Meyer V."/>
            <person name="Mirabito P."/>
            <person name="Miskei M."/>
            <person name="Mos M."/>
            <person name="Mullins J."/>
            <person name="Nelson D.R."/>
            <person name="Nielsen J."/>
            <person name="Oakley B.R."/>
            <person name="Osmani S.A."/>
            <person name="Pakula T."/>
            <person name="Paszewski A."/>
            <person name="Paulsen I."/>
            <person name="Pilsyk S."/>
            <person name="Pocsi I."/>
            <person name="Punt P.J."/>
            <person name="Ram A.F."/>
            <person name="Ren Q."/>
            <person name="Robellet X."/>
            <person name="Robson G."/>
            <person name="Seiboth B."/>
            <person name="van Solingen P."/>
            <person name="Specht T."/>
            <person name="Sun J."/>
            <person name="Taheri-Talesh N."/>
            <person name="Takeshita N."/>
            <person name="Ussery D."/>
            <person name="vanKuyk P.A."/>
            <person name="Visser H."/>
            <person name="van de Vondervoort P.J."/>
            <person name="de Vries R.P."/>
            <person name="Walton J."/>
            <person name="Xiang X."/>
            <person name="Xiong Y."/>
            <person name="Zeng A.P."/>
            <person name="Brandt B.W."/>
            <person name="Cornell M.J."/>
            <person name="van den Hondel C.A."/>
            <person name="Visser J."/>
            <person name="Oliver S.G."/>
            <person name="Turner G."/>
        </authorList>
    </citation>
    <scope>GENOME REANNOTATION</scope>
    <source>
        <strain>FGSC A4 / ATCC 38163 / CBS 112.46 / NRRL 194 / M139</strain>
    </source>
</reference>
<name>UBX1_EMENI</name>
<proteinExistence type="inferred from homology"/>
<protein>
    <recommendedName>
        <fullName>UBX domain-containing protein 1</fullName>
    </recommendedName>
</protein>
<feature type="chain" id="PRO_0000363397" description="UBX domain-containing protein 1">
    <location>
        <begin position="1"/>
        <end position="373"/>
    </location>
</feature>
<feature type="domain" description="SEP" evidence="3">
    <location>
        <begin position="185"/>
        <end position="258"/>
    </location>
</feature>
<feature type="domain" description="UBX" evidence="2">
    <location>
        <begin position="292"/>
        <end position="369"/>
    </location>
</feature>
<feature type="region of interest" description="Disordered" evidence="4">
    <location>
        <begin position="39"/>
        <end position="179"/>
    </location>
</feature>
<feature type="region of interest" description="Disordered" evidence="4">
    <location>
        <begin position="236"/>
        <end position="293"/>
    </location>
</feature>
<feature type="compositionally biased region" description="Polar residues" evidence="4">
    <location>
        <begin position="49"/>
        <end position="59"/>
    </location>
</feature>
<feature type="compositionally biased region" description="Low complexity" evidence="4">
    <location>
        <begin position="60"/>
        <end position="71"/>
    </location>
</feature>
<feature type="compositionally biased region" description="Low complexity" evidence="4">
    <location>
        <begin position="85"/>
        <end position="94"/>
    </location>
</feature>
<feature type="compositionally biased region" description="Acidic residues" evidence="4">
    <location>
        <begin position="95"/>
        <end position="104"/>
    </location>
</feature>
<feature type="compositionally biased region" description="Basic and acidic residues" evidence="4">
    <location>
        <begin position="121"/>
        <end position="132"/>
    </location>
</feature>
<keyword id="KW-1185">Reference proteome</keyword>
<keyword id="KW-0833">Ubl conjugation pathway</keyword>
<organism>
    <name type="scientific">Emericella nidulans (strain FGSC A4 / ATCC 38163 / CBS 112.46 / NRRL 194 / M139)</name>
    <name type="common">Aspergillus nidulans</name>
    <dbReference type="NCBI Taxonomy" id="227321"/>
    <lineage>
        <taxon>Eukaryota</taxon>
        <taxon>Fungi</taxon>
        <taxon>Dikarya</taxon>
        <taxon>Ascomycota</taxon>
        <taxon>Pezizomycotina</taxon>
        <taxon>Eurotiomycetes</taxon>
        <taxon>Eurotiomycetidae</taxon>
        <taxon>Eurotiales</taxon>
        <taxon>Aspergillaceae</taxon>
        <taxon>Aspergillus</taxon>
        <taxon>Aspergillus subgen. Nidulantes</taxon>
    </lineage>
</organism>
<gene>
    <name type="primary">ubx1</name>
    <name type="ORF">AN11055</name>
</gene>
<sequence>MNPAEHDEAVSQFCAMTRARPDEAQEYLATNGWDLEAAVTEFFAEQDETAGSSEPTGQPSAKSSSSTPRESSSSRKQPPKKFATLGDLASGAADSSDDDDDENQDFFAGGEKSGLAVQNPDDLKKKIIEKARRTQLPASDDSEPRRNYFTGPARTLGGEDTPSRVIDTPSGPAQPQIPRRVRRTLHFWADGFSVDDGELYRSDDPQNAEILNSIRQGRAPLSIMNAQHGQDVDVEIKQHDEKYVRPKPKYQPFAGKGQRLGSPTPGIRAPAPSEPAPAPQSSSGPPKPNVDESQPVVTLQIRLGDGTRLTSRFNTTHTIGDVYDFVSAASPQSQARPWVLLTTFPSKELTDKAAVLGDLPEFKRGGVVVQKWQ</sequence>
<comment type="function">
    <text evidence="1">Involved in CDC48-dependent protein degradation through the ubiquitin/proteasome pathway.</text>
</comment>
<comment type="sequence caution" evidence="5">
    <conflict type="erroneous gene model prediction">
        <sequence resource="EMBL-CDS" id="EAA58884"/>
    </conflict>
    <text>The predicted gene AN8228 has been split into 2 genes: AN11055 and AN11060.</text>
</comment>